<accession>Q5RJS9</accession>
<name>RPF1_RAT</name>
<proteinExistence type="evidence at transcript level"/>
<organism>
    <name type="scientific">Rattus norvegicus</name>
    <name type="common">Rat</name>
    <dbReference type="NCBI Taxonomy" id="10116"/>
    <lineage>
        <taxon>Eukaryota</taxon>
        <taxon>Metazoa</taxon>
        <taxon>Chordata</taxon>
        <taxon>Craniata</taxon>
        <taxon>Vertebrata</taxon>
        <taxon>Euteleostomi</taxon>
        <taxon>Mammalia</taxon>
        <taxon>Eutheria</taxon>
        <taxon>Euarchontoglires</taxon>
        <taxon>Glires</taxon>
        <taxon>Rodentia</taxon>
        <taxon>Myomorpha</taxon>
        <taxon>Muroidea</taxon>
        <taxon>Muridae</taxon>
        <taxon>Murinae</taxon>
        <taxon>Rattus</taxon>
    </lineage>
</organism>
<dbReference type="EMBL" id="RNOR03268045">
    <property type="status" value="NOT_ANNOTATED_CDS"/>
    <property type="molecule type" value="Genomic_DNA"/>
</dbReference>
<dbReference type="EMBL" id="BC086515">
    <property type="protein sequence ID" value="AAH86515.1"/>
    <property type="molecule type" value="mRNA"/>
</dbReference>
<dbReference type="SMR" id="Q5RJS9"/>
<dbReference type="FunCoup" id="Q5RJS9">
    <property type="interactions" value="1531"/>
</dbReference>
<dbReference type="STRING" id="10116.ENSRNOP00000021705"/>
<dbReference type="PhosphoSitePlus" id="Q5RJS9"/>
<dbReference type="PaxDb" id="10116-ENSRNOP00000021705"/>
<dbReference type="Ensembl" id="ENSRNOT00000100500.1">
    <property type="protein sequence ID" value="ENSRNOP00000077854.1"/>
    <property type="gene ID" value="ENSRNOG00000015969.8"/>
</dbReference>
<dbReference type="AGR" id="RGD:1559755"/>
<dbReference type="RGD" id="1559755">
    <property type="gene designation" value="Rpf1"/>
</dbReference>
<dbReference type="eggNOG" id="KOG2780">
    <property type="taxonomic scope" value="Eukaryota"/>
</dbReference>
<dbReference type="GeneTree" id="ENSGT00940000153231"/>
<dbReference type="InParanoid" id="Q5RJS9"/>
<dbReference type="PRO" id="PR:Q5RJS9"/>
<dbReference type="Proteomes" id="UP000002494">
    <property type="component" value="Chromosome 2"/>
</dbReference>
<dbReference type="GO" id="GO:0005730">
    <property type="term" value="C:nucleolus"/>
    <property type="evidence" value="ECO:0000250"/>
    <property type="project" value="UniProtKB"/>
</dbReference>
<dbReference type="GO" id="GO:0030687">
    <property type="term" value="C:preribosome, large subunit precursor"/>
    <property type="evidence" value="ECO:0000318"/>
    <property type="project" value="GO_Central"/>
</dbReference>
<dbReference type="GO" id="GO:0003723">
    <property type="term" value="F:RNA binding"/>
    <property type="evidence" value="ECO:0000250"/>
    <property type="project" value="UniProtKB"/>
</dbReference>
<dbReference type="GO" id="GO:0042134">
    <property type="term" value="F:rRNA primary transcript binding"/>
    <property type="evidence" value="ECO:0007669"/>
    <property type="project" value="InterPro"/>
</dbReference>
<dbReference type="GO" id="GO:0000460">
    <property type="term" value="P:maturation of 5.8S rRNA"/>
    <property type="evidence" value="ECO:0000318"/>
    <property type="project" value="GO_Central"/>
</dbReference>
<dbReference type="GO" id="GO:0000470">
    <property type="term" value="P:maturation of LSU-rRNA"/>
    <property type="evidence" value="ECO:0000318"/>
    <property type="project" value="GO_Central"/>
</dbReference>
<dbReference type="FunFam" id="3.40.50.10480:FF:000002">
    <property type="entry name" value="Ribosome production factor 1"/>
    <property type="match status" value="1"/>
</dbReference>
<dbReference type="Gene3D" id="3.40.50.10480">
    <property type="entry name" value="Probable brix-domain ribosomal biogenesis protein"/>
    <property type="match status" value="1"/>
</dbReference>
<dbReference type="InterPro" id="IPR007109">
    <property type="entry name" value="Brix"/>
</dbReference>
<dbReference type="InterPro" id="IPR044281">
    <property type="entry name" value="IMP4/RPF1"/>
</dbReference>
<dbReference type="PANTHER" id="PTHR22734:SF3">
    <property type="entry name" value="RIBOSOME PRODUCTION FACTOR 1"/>
    <property type="match status" value="1"/>
</dbReference>
<dbReference type="PANTHER" id="PTHR22734">
    <property type="entry name" value="U3 SMALL NUCLEOLAR RIBONUCLEOPROTEIN PROTEIN IMP4"/>
    <property type="match status" value="1"/>
</dbReference>
<dbReference type="Pfam" id="PF04427">
    <property type="entry name" value="Brix"/>
    <property type="match status" value="1"/>
</dbReference>
<dbReference type="SMART" id="SM00879">
    <property type="entry name" value="Brix"/>
    <property type="match status" value="1"/>
</dbReference>
<dbReference type="SUPFAM" id="SSF52954">
    <property type="entry name" value="Class II aaRS ABD-related"/>
    <property type="match status" value="1"/>
</dbReference>
<dbReference type="PROSITE" id="PS50833">
    <property type="entry name" value="BRIX"/>
    <property type="match status" value="1"/>
</dbReference>
<reference key="1">
    <citation type="journal article" date="2004" name="Nature">
        <title>Genome sequence of the Brown Norway rat yields insights into mammalian evolution.</title>
        <authorList>
            <person name="Gibbs R.A."/>
            <person name="Weinstock G.M."/>
            <person name="Metzker M.L."/>
            <person name="Muzny D.M."/>
            <person name="Sodergren E.J."/>
            <person name="Scherer S."/>
            <person name="Scott G."/>
            <person name="Steffen D."/>
            <person name="Worley K.C."/>
            <person name="Burch P.E."/>
            <person name="Okwuonu G."/>
            <person name="Hines S."/>
            <person name="Lewis L."/>
            <person name="Deramo C."/>
            <person name="Delgado O."/>
            <person name="Dugan-Rocha S."/>
            <person name="Miner G."/>
            <person name="Morgan M."/>
            <person name="Hawes A."/>
            <person name="Gill R."/>
            <person name="Holt R.A."/>
            <person name="Adams M.D."/>
            <person name="Amanatides P.G."/>
            <person name="Baden-Tillson H."/>
            <person name="Barnstead M."/>
            <person name="Chin S."/>
            <person name="Evans C.A."/>
            <person name="Ferriera S."/>
            <person name="Fosler C."/>
            <person name="Glodek A."/>
            <person name="Gu Z."/>
            <person name="Jennings D."/>
            <person name="Kraft C.L."/>
            <person name="Nguyen T."/>
            <person name="Pfannkoch C.M."/>
            <person name="Sitter C."/>
            <person name="Sutton G.G."/>
            <person name="Venter J.C."/>
            <person name="Woodage T."/>
            <person name="Smith D."/>
            <person name="Lee H.-M."/>
            <person name="Gustafson E."/>
            <person name="Cahill P."/>
            <person name="Kana A."/>
            <person name="Doucette-Stamm L."/>
            <person name="Weinstock K."/>
            <person name="Fechtel K."/>
            <person name="Weiss R.B."/>
            <person name="Dunn D.M."/>
            <person name="Green E.D."/>
            <person name="Blakesley R.W."/>
            <person name="Bouffard G.G."/>
            <person name="De Jong P.J."/>
            <person name="Osoegawa K."/>
            <person name="Zhu B."/>
            <person name="Marra M."/>
            <person name="Schein J."/>
            <person name="Bosdet I."/>
            <person name="Fjell C."/>
            <person name="Jones S."/>
            <person name="Krzywinski M."/>
            <person name="Mathewson C."/>
            <person name="Siddiqui A."/>
            <person name="Wye N."/>
            <person name="McPherson J."/>
            <person name="Zhao S."/>
            <person name="Fraser C.M."/>
            <person name="Shetty J."/>
            <person name="Shatsman S."/>
            <person name="Geer K."/>
            <person name="Chen Y."/>
            <person name="Abramzon S."/>
            <person name="Nierman W.C."/>
            <person name="Havlak P.H."/>
            <person name="Chen R."/>
            <person name="Durbin K.J."/>
            <person name="Egan A."/>
            <person name="Ren Y."/>
            <person name="Song X.-Z."/>
            <person name="Li B."/>
            <person name="Liu Y."/>
            <person name="Qin X."/>
            <person name="Cawley S."/>
            <person name="Cooney A.J."/>
            <person name="D'Souza L.M."/>
            <person name="Martin K."/>
            <person name="Wu J.Q."/>
            <person name="Gonzalez-Garay M.L."/>
            <person name="Jackson A.R."/>
            <person name="Kalafus K.J."/>
            <person name="McLeod M.P."/>
            <person name="Milosavljevic A."/>
            <person name="Virk D."/>
            <person name="Volkov A."/>
            <person name="Wheeler D.A."/>
            <person name="Zhang Z."/>
            <person name="Bailey J.A."/>
            <person name="Eichler E.E."/>
            <person name="Tuzun E."/>
            <person name="Birney E."/>
            <person name="Mongin E."/>
            <person name="Ureta-Vidal A."/>
            <person name="Woodwark C."/>
            <person name="Zdobnov E."/>
            <person name="Bork P."/>
            <person name="Suyama M."/>
            <person name="Torrents D."/>
            <person name="Alexandersson M."/>
            <person name="Trask B.J."/>
            <person name="Young J.M."/>
            <person name="Huang H."/>
            <person name="Wang H."/>
            <person name="Xing H."/>
            <person name="Daniels S."/>
            <person name="Gietzen D."/>
            <person name="Schmidt J."/>
            <person name="Stevens K."/>
            <person name="Vitt U."/>
            <person name="Wingrove J."/>
            <person name="Camara F."/>
            <person name="Mar Alba M."/>
            <person name="Abril J.F."/>
            <person name="Guigo R."/>
            <person name="Smit A."/>
            <person name="Dubchak I."/>
            <person name="Rubin E.M."/>
            <person name="Couronne O."/>
            <person name="Poliakov A."/>
            <person name="Huebner N."/>
            <person name="Ganten D."/>
            <person name="Goesele C."/>
            <person name="Hummel O."/>
            <person name="Kreitler T."/>
            <person name="Lee Y.-A."/>
            <person name="Monti J."/>
            <person name="Schulz H."/>
            <person name="Zimdahl H."/>
            <person name="Himmelbauer H."/>
            <person name="Lehrach H."/>
            <person name="Jacob H.J."/>
            <person name="Bromberg S."/>
            <person name="Gullings-Handley J."/>
            <person name="Jensen-Seaman M.I."/>
            <person name="Kwitek A.E."/>
            <person name="Lazar J."/>
            <person name="Pasko D."/>
            <person name="Tonellato P.J."/>
            <person name="Twigger S."/>
            <person name="Ponting C.P."/>
            <person name="Duarte J.M."/>
            <person name="Rice S."/>
            <person name="Goodstadt L."/>
            <person name="Beatson S.A."/>
            <person name="Emes R.D."/>
            <person name="Winter E.E."/>
            <person name="Webber C."/>
            <person name="Brandt P."/>
            <person name="Nyakatura G."/>
            <person name="Adetobi M."/>
            <person name="Chiaromonte F."/>
            <person name="Elnitski L."/>
            <person name="Eswara P."/>
            <person name="Hardison R.C."/>
            <person name="Hou M."/>
            <person name="Kolbe D."/>
            <person name="Makova K."/>
            <person name="Miller W."/>
            <person name="Nekrutenko A."/>
            <person name="Riemer C."/>
            <person name="Schwartz S."/>
            <person name="Taylor J."/>
            <person name="Yang S."/>
            <person name="Zhang Y."/>
            <person name="Lindpaintner K."/>
            <person name="Andrews T.D."/>
            <person name="Caccamo M."/>
            <person name="Clamp M."/>
            <person name="Clarke L."/>
            <person name="Curwen V."/>
            <person name="Durbin R.M."/>
            <person name="Eyras E."/>
            <person name="Searle S.M."/>
            <person name="Cooper G.M."/>
            <person name="Batzoglou S."/>
            <person name="Brudno M."/>
            <person name="Sidow A."/>
            <person name="Stone E.A."/>
            <person name="Payseur B.A."/>
            <person name="Bourque G."/>
            <person name="Lopez-Otin C."/>
            <person name="Puente X.S."/>
            <person name="Chakrabarti K."/>
            <person name="Chatterji S."/>
            <person name="Dewey C."/>
            <person name="Pachter L."/>
            <person name="Bray N."/>
            <person name="Yap V.B."/>
            <person name="Caspi A."/>
            <person name="Tesler G."/>
            <person name="Pevzner P.A."/>
            <person name="Haussler D."/>
            <person name="Roskin K.M."/>
            <person name="Baertsch R."/>
            <person name="Clawson H."/>
            <person name="Furey T.S."/>
            <person name="Hinrichs A.S."/>
            <person name="Karolchik D."/>
            <person name="Kent W.J."/>
            <person name="Rosenbloom K.R."/>
            <person name="Trumbower H."/>
            <person name="Weirauch M."/>
            <person name="Cooper D.N."/>
            <person name="Stenson P.D."/>
            <person name="Ma B."/>
            <person name="Brent M."/>
            <person name="Arumugam M."/>
            <person name="Shteynberg D."/>
            <person name="Copley R.R."/>
            <person name="Taylor M.S."/>
            <person name="Riethman H."/>
            <person name="Mudunuri U."/>
            <person name="Peterson J."/>
            <person name="Guyer M."/>
            <person name="Felsenfeld A."/>
            <person name="Old S."/>
            <person name="Mockrin S."/>
            <person name="Collins F.S."/>
        </authorList>
    </citation>
    <scope>NUCLEOTIDE SEQUENCE [LARGE SCALE GENOMIC DNA]</scope>
</reference>
<reference key="2">
    <citation type="journal article" date="2004" name="Genome Res.">
        <title>The status, quality, and expansion of the NIH full-length cDNA project: the Mammalian Gene Collection (MGC).</title>
        <authorList>
            <consortium name="The MGC Project Team"/>
        </authorList>
    </citation>
    <scope>NUCLEOTIDE SEQUENCE [LARGE SCALE MRNA] OF 2-345</scope>
    <source>
        <tissue>Ovary</tissue>
    </source>
</reference>
<protein>
    <recommendedName>
        <fullName>Ribosome production factor 1</fullName>
    </recommendedName>
    <alternativeName>
        <fullName>Brix domain-containing protein 5</fullName>
    </alternativeName>
    <alternativeName>
        <fullName>Ribosome biogenesis protein RPF1</fullName>
    </alternativeName>
</protein>
<evidence type="ECO:0000250" key="1"/>
<evidence type="ECO:0000255" key="2">
    <source>
        <dbReference type="PROSITE-ProRule" id="PRU00034"/>
    </source>
</evidence>
<evidence type="ECO:0000256" key="3">
    <source>
        <dbReference type="SAM" id="MobiDB-lite"/>
    </source>
</evidence>
<sequence>MAKAGEKSGGGGKRGLKRKAPAEEPQETAVASDGTAESGVQSAKAAAFPPGFSISEIKNKQRRHLMFTRWKQQQRKEKLAAKKKLKREREALGDKAPPKPVPKTIDNQRVYDETTVDPNDEEVAYDEATDEFASYFNRQTSPKILITTSDRPHGRTVRLCEQLSTVIPDSHVYYRRGLALKKIIPQCIARDFTDLIVINEDRKTPNGLILSHLPNGPTAHFKMSSVRLRKEIKRRGKDPTEHVPEIILNNFTTRLGHSIGRMFASLFPHNPQFIGRQVATFHNQRDYIFFRFHRYIFKSEKKVGIQELGPRFTLKLRSLQKGTFDSKYGEYEWVHKVCAYCSKAI</sequence>
<gene>
    <name type="primary">Rpf1</name>
    <name type="synonym">Bxdc5</name>
</gene>
<comment type="function">
    <text evidence="1">May be required for ribosome biogenesis.</text>
</comment>
<comment type="subcellular location">
    <subcellularLocation>
        <location evidence="1">Nucleus</location>
        <location evidence="1">Nucleolus</location>
    </subcellularLocation>
</comment>
<keyword id="KW-0539">Nucleus</keyword>
<keyword id="KW-1185">Reference proteome</keyword>
<keyword id="KW-0690">Ribosome biogenesis</keyword>
<keyword id="KW-0694">RNA-binding</keyword>
<keyword id="KW-0698">rRNA processing</keyword>
<keyword id="KW-0699">rRNA-binding</keyword>
<feature type="chain" id="PRO_0000120251" description="Ribosome production factor 1">
    <location>
        <begin position="1"/>
        <end position="345"/>
    </location>
</feature>
<feature type="domain" description="Brix" evidence="2">
    <location>
        <begin position="142"/>
        <end position="325"/>
    </location>
</feature>
<feature type="region of interest" description="Disordered" evidence="3">
    <location>
        <begin position="1"/>
        <end position="57"/>
    </location>
</feature>
<feature type="region of interest" description="Disordered" evidence="3">
    <location>
        <begin position="70"/>
        <end position="105"/>
    </location>
</feature>
<feature type="region of interest" description="RNA-binding" evidence="1">
    <location>
        <begin position="303"/>
        <end position="320"/>
    </location>
</feature>
<feature type="compositionally biased region" description="Basic and acidic residues" evidence="3">
    <location>
        <begin position="87"/>
        <end position="97"/>
    </location>
</feature>